<reference key="1">
    <citation type="journal article" date="2006" name="Proc. Natl. Acad. Sci. U.S.A.">
        <title>Burkholderia xenovorans LB400 harbors a multi-replicon, 9.73-Mbp genome shaped for versatility.</title>
        <authorList>
            <person name="Chain P.S.G."/>
            <person name="Denef V.J."/>
            <person name="Konstantinidis K.T."/>
            <person name="Vergez L.M."/>
            <person name="Agullo L."/>
            <person name="Reyes V.L."/>
            <person name="Hauser L."/>
            <person name="Cordova M."/>
            <person name="Gomez L."/>
            <person name="Gonzalez M."/>
            <person name="Land M."/>
            <person name="Lao V."/>
            <person name="Larimer F."/>
            <person name="LiPuma J.J."/>
            <person name="Mahenthiralingam E."/>
            <person name="Malfatti S.A."/>
            <person name="Marx C.J."/>
            <person name="Parnell J.J."/>
            <person name="Ramette A."/>
            <person name="Richardson P."/>
            <person name="Seeger M."/>
            <person name="Smith D."/>
            <person name="Spilker T."/>
            <person name="Sul W.J."/>
            <person name="Tsoi T.V."/>
            <person name="Ulrich L.E."/>
            <person name="Zhulin I.B."/>
            <person name="Tiedje J.M."/>
        </authorList>
    </citation>
    <scope>NUCLEOTIDE SEQUENCE [LARGE SCALE GENOMIC DNA]</scope>
    <source>
        <strain>LB400</strain>
    </source>
</reference>
<proteinExistence type="inferred from homology"/>
<comment type="function">
    <text evidence="1">Member of a network of 50S ribosomal subunit biogenesis factors which assembles along the 30S-50S interface, preventing incorrect 23S rRNA structures from forming. Promotes peptidyl transferase center (PTC) maturation.</text>
</comment>
<comment type="subcellular location">
    <subcellularLocation>
        <location evidence="1">Cytoplasm</location>
    </subcellularLocation>
    <text evidence="1">Associates with late stage pre-50S ribosomal subunits.</text>
</comment>
<comment type="similarity">
    <text evidence="1">Belongs to the DarP family.</text>
</comment>
<dbReference type="EMBL" id="CP000270">
    <property type="protein sequence ID" value="ABE31929.1"/>
    <property type="molecule type" value="Genomic_DNA"/>
</dbReference>
<dbReference type="RefSeq" id="WP_011489447.1">
    <property type="nucleotide sequence ID" value="NC_007951.1"/>
</dbReference>
<dbReference type="SMR" id="Q13VG0"/>
<dbReference type="STRING" id="266265.Bxe_A1018"/>
<dbReference type="KEGG" id="bxb:DR64_3180"/>
<dbReference type="KEGG" id="bxe:Bxe_A1018"/>
<dbReference type="PATRIC" id="fig|266265.5.peg.3562"/>
<dbReference type="eggNOG" id="COG3028">
    <property type="taxonomic scope" value="Bacteria"/>
</dbReference>
<dbReference type="OrthoDB" id="5293604at2"/>
<dbReference type="Proteomes" id="UP000001817">
    <property type="component" value="Chromosome 1"/>
</dbReference>
<dbReference type="GO" id="GO:0005829">
    <property type="term" value="C:cytosol"/>
    <property type="evidence" value="ECO:0007669"/>
    <property type="project" value="TreeGrafter"/>
</dbReference>
<dbReference type="GO" id="GO:0043022">
    <property type="term" value="F:ribosome binding"/>
    <property type="evidence" value="ECO:0007669"/>
    <property type="project" value="UniProtKB-UniRule"/>
</dbReference>
<dbReference type="GO" id="GO:0019843">
    <property type="term" value="F:rRNA binding"/>
    <property type="evidence" value="ECO:0007669"/>
    <property type="project" value="UniProtKB-UniRule"/>
</dbReference>
<dbReference type="GO" id="GO:1902626">
    <property type="term" value="P:assembly of large subunit precursor of preribosome"/>
    <property type="evidence" value="ECO:0007669"/>
    <property type="project" value="UniProtKB-UniRule"/>
</dbReference>
<dbReference type="CDD" id="cd16331">
    <property type="entry name" value="YjgA-like"/>
    <property type="match status" value="1"/>
</dbReference>
<dbReference type="Gene3D" id="1.10.60.30">
    <property type="entry name" value="PSPTO4464-like domains"/>
    <property type="match status" value="2"/>
</dbReference>
<dbReference type="HAMAP" id="MF_00765">
    <property type="entry name" value="DarP"/>
    <property type="match status" value="1"/>
</dbReference>
<dbReference type="InterPro" id="IPR006839">
    <property type="entry name" value="DarP"/>
</dbReference>
<dbReference type="InterPro" id="IPR023153">
    <property type="entry name" value="DarP_sf"/>
</dbReference>
<dbReference type="NCBIfam" id="NF003593">
    <property type="entry name" value="PRK05255.1-1"/>
    <property type="match status" value="1"/>
</dbReference>
<dbReference type="PANTHER" id="PTHR38101">
    <property type="entry name" value="UPF0307 PROTEIN YJGA"/>
    <property type="match status" value="1"/>
</dbReference>
<dbReference type="PANTHER" id="PTHR38101:SF1">
    <property type="entry name" value="UPF0307 PROTEIN YJGA"/>
    <property type="match status" value="1"/>
</dbReference>
<dbReference type="Pfam" id="PF04751">
    <property type="entry name" value="DarP"/>
    <property type="match status" value="1"/>
</dbReference>
<dbReference type="PIRSF" id="PIRSF016183">
    <property type="entry name" value="UCP016183"/>
    <property type="match status" value="1"/>
</dbReference>
<dbReference type="SUPFAM" id="SSF158710">
    <property type="entry name" value="PSPTO4464-like"/>
    <property type="match status" value="1"/>
</dbReference>
<protein>
    <recommendedName>
        <fullName evidence="1">Dual-action ribosomal maturation protein DarP</fullName>
    </recommendedName>
    <alternativeName>
        <fullName evidence="1">Large ribosomal subunit assembly factor DarP</fullName>
    </alternativeName>
</protein>
<gene>
    <name evidence="1" type="primary">darP</name>
    <name type="ordered locus">Bxeno_A3391</name>
    <name type="ORF">Bxe_A1018</name>
</gene>
<organism>
    <name type="scientific">Paraburkholderia xenovorans (strain LB400)</name>
    <dbReference type="NCBI Taxonomy" id="266265"/>
    <lineage>
        <taxon>Bacteria</taxon>
        <taxon>Pseudomonadati</taxon>
        <taxon>Pseudomonadota</taxon>
        <taxon>Betaproteobacteria</taxon>
        <taxon>Burkholderiales</taxon>
        <taxon>Burkholderiaceae</taxon>
        <taxon>Paraburkholderia</taxon>
    </lineage>
</organism>
<sequence>MTRKTRIQTIESAEPEVDENGYDRPSKSQLKREMHELQELGAALIALPKDALKRMPMPEKLDDAVREARRITDHEGKRRQVQYVGRVMRSLLDEETAALRTALDTYNGVNKAETAKLHWIERTREKLLADDAALTDFIRQHPNADPQQGRTLIRNARKEAQQSKPPRYFRELFQWIKNADGPPAQTDSEADDAQDDEDDDRDA</sequence>
<keyword id="KW-0963">Cytoplasm</keyword>
<keyword id="KW-1185">Reference proteome</keyword>
<keyword id="KW-0690">Ribosome biogenesis</keyword>
<keyword id="KW-0694">RNA-binding</keyword>
<keyword id="KW-0699">rRNA-binding</keyword>
<name>DARP_PARXL</name>
<evidence type="ECO:0000255" key="1">
    <source>
        <dbReference type="HAMAP-Rule" id="MF_00765"/>
    </source>
</evidence>
<evidence type="ECO:0000256" key="2">
    <source>
        <dbReference type="SAM" id="MobiDB-lite"/>
    </source>
</evidence>
<accession>Q13VG0</accession>
<feature type="chain" id="PRO_0000257625" description="Dual-action ribosomal maturation protein DarP">
    <location>
        <begin position="1"/>
        <end position="203"/>
    </location>
</feature>
<feature type="region of interest" description="Disordered" evidence="2">
    <location>
        <begin position="1"/>
        <end position="31"/>
    </location>
</feature>
<feature type="region of interest" description="Disordered" evidence="2">
    <location>
        <begin position="178"/>
        <end position="203"/>
    </location>
</feature>
<feature type="compositionally biased region" description="Basic and acidic residues" evidence="2">
    <location>
        <begin position="21"/>
        <end position="31"/>
    </location>
</feature>
<feature type="compositionally biased region" description="Acidic residues" evidence="2">
    <location>
        <begin position="188"/>
        <end position="203"/>
    </location>
</feature>